<reference key="1">
    <citation type="journal article" date="2011" name="J. Bacteriol.">
        <title>Genome of Ochrobactrum anthropi ATCC 49188 T, a versatile opportunistic pathogen and symbiont of several eukaryotic hosts.</title>
        <authorList>
            <person name="Chain P.S."/>
            <person name="Lang D.M."/>
            <person name="Comerci D.J."/>
            <person name="Malfatti S.A."/>
            <person name="Vergez L.M."/>
            <person name="Shin M."/>
            <person name="Ugalde R.A."/>
            <person name="Garcia E."/>
            <person name="Tolmasky M.E."/>
        </authorList>
    </citation>
    <scope>NUCLEOTIDE SEQUENCE [LARGE SCALE GENOMIC DNA]</scope>
    <source>
        <strain>ATCC 49188 / DSM 6882 / CCUG 24695 / JCM 21032 / LMG 3331 / NBRC 15819 / NCTC 12168 / Alc 37</strain>
    </source>
</reference>
<dbReference type="EMBL" id="CP000758">
    <property type="protein sequence ID" value="ABS13935.1"/>
    <property type="molecule type" value="Genomic_DNA"/>
</dbReference>
<dbReference type="RefSeq" id="WP_010661373.1">
    <property type="nucleotide sequence ID" value="NC_009667.1"/>
</dbReference>
<dbReference type="SMR" id="A6WY81"/>
<dbReference type="STRING" id="439375.Oant_1218"/>
<dbReference type="GeneID" id="61318295"/>
<dbReference type="KEGG" id="oan:Oant_1218"/>
<dbReference type="eggNOG" id="COG0823">
    <property type="taxonomic scope" value="Bacteria"/>
</dbReference>
<dbReference type="HOGENOM" id="CLU_047123_0_0_5"/>
<dbReference type="PhylomeDB" id="A6WY81"/>
<dbReference type="Proteomes" id="UP000002301">
    <property type="component" value="Chromosome 1"/>
</dbReference>
<dbReference type="GO" id="GO:0042597">
    <property type="term" value="C:periplasmic space"/>
    <property type="evidence" value="ECO:0007669"/>
    <property type="project" value="UniProtKB-SubCell"/>
</dbReference>
<dbReference type="GO" id="GO:0051301">
    <property type="term" value="P:cell division"/>
    <property type="evidence" value="ECO:0007669"/>
    <property type="project" value="UniProtKB-UniRule"/>
</dbReference>
<dbReference type="GO" id="GO:0017038">
    <property type="term" value="P:protein import"/>
    <property type="evidence" value="ECO:0007669"/>
    <property type="project" value="InterPro"/>
</dbReference>
<dbReference type="Gene3D" id="2.120.10.30">
    <property type="entry name" value="TolB, C-terminal domain"/>
    <property type="match status" value="1"/>
</dbReference>
<dbReference type="Gene3D" id="3.40.50.10070">
    <property type="entry name" value="TolB, N-terminal domain"/>
    <property type="match status" value="1"/>
</dbReference>
<dbReference type="HAMAP" id="MF_00671">
    <property type="entry name" value="TolB"/>
    <property type="match status" value="1"/>
</dbReference>
<dbReference type="InterPro" id="IPR011042">
    <property type="entry name" value="6-blade_b-propeller_TolB-like"/>
</dbReference>
<dbReference type="InterPro" id="IPR011659">
    <property type="entry name" value="PD40"/>
</dbReference>
<dbReference type="InterPro" id="IPR014167">
    <property type="entry name" value="Tol-Pal_TolB"/>
</dbReference>
<dbReference type="InterPro" id="IPR007195">
    <property type="entry name" value="TolB_N"/>
</dbReference>
<dbReference type="NCBIfam" id="TIGR02800">
    <property type="entry name" value="propeller_TolB"/>
    <property type="match status" value="1"/>
</dbReference>
<dbReference type="PANTHER" id="PTHR36842:SF1">
    <property type="entry name" value="PROTEIN TOLB"/>
    <property type="match status" value="1"/>
</dbReference>
<dbReference type="PANTHER" id="PTHR36842">
    <property type="entry name" value="PROTEIN TOLB HOMOLOG"/>
    <property type="match status" value="1"/>
</dbReference>
<dbReference type="Pfam" id="PF07676">
    <property type="entry name" value="PD40"/>
    <property type="match status" value="4"/>
</dbReference>
<dbReference type="Pfam" id="PF04052">
    <property type="entry name" value="TolB_N"/>
    <property type="match status" value="1"/>
</dbReference>
<dbReference type="SUPFAM" id="SSF52964">
    <property type="entry name" value="TolB, N-terminal domain"/>
    <property type="match status" value="1"/>
</dbReference>
<dbReference type="SUPFAM" id="SSF69304">
    <property type="entry name" value="Tricorn protease N-terminal domain"/>
    <property type="match status" value="1"/>
</dbReference>
<gene>
    <name evidence="1" type="primary">tolB</name>
    <name type="ordered locus">Oant_1218</name>
</gene>
<accession>A6WY81</accession>
<protein>
    <recommendedName>
        <fullName evidence="1">Tol-Pal system protein TolB</fullName>
    </recommendedName>
</protein>
<evidence type="ECO:0000255" key="1">
    <source>
        <dbReference type="HAMAP-Rule" id="MF_00671"/>
    </source>
</evidence>
<proteinExistence type="inferred from homology"/>
<comment type="function">
    <text evidence="1">Part of the Tol-Pal system, which plays a role in outer membrane invagination during cell division and is important for maintaining outer membrane integrity.</text>
</comment>
<comment type="subunit">
    <text evidence="1">The Tol-Pal system is composed of five core proteins: the inner membrane proteins TolA, TolQ and TolR, the periplasmic protein TolB and the outer membrane protein Pal. They form a network linking the inner and outer membranes and the peptidoglycan layer.</text>
</comment>
<comment type="subcellular location">
    <subcellularLocation>
        <location evidence="1">Periplasm</location>
    </subcellularLocation>
</comment>
<comment type="similarity">
    <text evidence="1">Belongs to the TolB family.</text>
</comment>
<sequence length="443" mass="48537">MKIGIINTKIRTVFSAFACMIAASLVCTMPARAVVEININKGVIEPLPIAITDFLSADQLGPNITSVIAADLERSGLFAPIDKGAFIEKISNPDAAPRFEDWKVINAQALVTGRITKQPDGRLKAEFRLWDTFGGQQMIGQQFFTTPDNWRRVAHIIADAIYERLTGEKGYFDTRVVFVDESGPAQKRVKRLAIMDQDGANVRYISDGRAISLTPRFSPNRQEVTYMSFEGGSPKVYLLQLETGQRELVGNFPGMTIAPRFSPDGQKVVMSLLQDDGSANIYTMDLRNRSTTRLTNSQAIDTSASYSPDGSQIVFSSDRGGRPQLYVMGADGSNPRRISAGDGSYSTPVWSPRGDLIAFTKQSQGQFSIGVMKTDGSGERLLTSGFHNEGPTWAPNGRVLMFFRKAAGAGGPKLFTIDLTGRNERQIQTPNFASDPAWSPLLE</sequence>
<organism>
    <name type="scientific">Brucella anthropi (strain ATCC 49188 / DSM 6882 / CCUG 24695 / JCM 21032 / LMG 3331 / NBRC 15819 / NCTC 12168 / Alc 37)</name>
    <name type="common">Ochrobactrum anthropi</name>
    <dbReference type="NCBI Taxonomy" id="439375"/>
    <lineage>
        <taxon>Bacteria</taxon>
        <taxon>Pseudomonadati</taxon>
        <taxon>Pseudomonadota</taxon>
        <taxon>Alphaproteobacteria</taxon>
        <taxon>Hyphomicrobiales</taxon>
        <taxon>Brucellaceae</taxon>
        <taxon>Brucella/Ochrobactrum group</taxon>
        <taxon>Brucella</taxon>
    </lineage>
</organism>
<keyword id="KW-0131">Cell cycle</keyword>
<keyword id="KW-0132">Cell division</keyword>
<keyword id="KW-0574">Periplasm</keyword>
<keyword id="KW-1185">Reference proteome</keyword>
<keyword id="KW-0732">Signal</keyword>
<feature type="signal peptide" evidence="1">
    <location>
        <begin position="1"/>
        <end position="33"/>
    </location>
</feature>
<feature type="chain" id="PRO_5000261598" description="Tol-Pal system protein TolB" evidence="1">
    <location>
        <begin position="34"/>
        <end position="443"/>
    </location>
</feature>
<name>TOLB_BRUA4</name>